<sequence length="492" mass="55349">MKLSVFRLSYWNRRGSSFRSSPSLDPSFDGKSPSSVFWFVIHGLCCLISLILGFRFSHLVLFFLFSTSVTNLYTTPFLFAGNGGVSQLLRLKPLETATNSTVKKNSRVVVGRHGIRIRPWPHPNPIEVLRAHQLLVRVQKEQKSMYGVRSPRTVIVVTPTYVRTFQALHLTGVMHSLMLVPYDLVWIVVEAGGITNETASFIAKSGLKTIHLGFDQKMPNTWEDRHKLETKMRLHALRVVREKKLDGIVMFADDSNMHSMELFDEIQTVKWFGALSVGILAHSGNADELSSILKNEQGKNKEKPSMPIQGPSCNSSEKLVGWHIFNTQPYAKKTAVYIDEKAPVMPSKMEWSGFVLNSRLLWKESLDDKPAWVKDLSLLDDGYAEIESPLSLVKDPSMVEPLGSCGRRVLLWWLRVEARADSKFPPGWIIKSPLEITVPSKRTPWPDSSSELPAAAIKEAKSNSKPRVSKSKSYKEKQEPKAFDGVKVSATS</sequence>
<feature type="chain" id="PRO_0000407566" description="Probable beta-1,4-xylosyltransferase IRX14H">
    <location>
        <begin position="1"/>
        <end position="492"/>
    </location>
</feature>
<feature type="topological domain" description="Cytoplasmic" evidence="1">
    <location>
        <begin position="1"/>
        <end position="33"/>
    </location>
</feature>
<feature type="transmembrane region" description="Helical; Signal-anchor for type II membrane protein" evidence="1">
    <location>
        <begin position="34"/>
        <end position="54"/>
    </location>
</feature>
<feature type="topological domain" description="Lumenal" evidence="1">
    <location>
        <begin position="55"/>
        <end position="492"/>
    </location>
</feature>
<feature type="region of interest" description="Disordered" evidence="2">
    <location>
        <begin position="457"/>
        <end position="492"/>
    </location>
</feature>
<feature type="compositionally biased region" description="Basic and acidic residues" evidence="2">
    <location>
        <begin position="473"/>
        <end position="484"/>
    </location>
</feature>
<feature type="glycosylation site" description="N-linked (GlcNAc...) asparagine" evidence="1">
    <location>
        <position position="99"/>
    </location>
</feature>
<feature type="glycosylation site" description="N-linked (GlcNAc...) asparagine" evidence="1">
    <location>
        <position position="196"/>
    </location>
</feature>
<feature type="glycosylation site" description="N-linked (GlcNAc...) asparagine" evidence="1">
    <location>
        <position position="314"/>
    </location>
</feature>
<name>IX14H_ARATH</name>
<proteinExistence type="evidence at transcript level"/>
<protein>
    <recommendedName>
        <fullName>Probable beta-1,4-xylosyltransferase IRX14H</fullName>
        <ecNumber>2.4.2.-</ecNumber>
    </recommendedName>
    <alternativeName>
        <fullName>Protein IRREGULAR XYLEM 14 homolog</fullName>
    </alternativeName>
    <alternativeName>
        <fullName>Xylan xylosyltransferase IRX14H</fullName>
    </alternativeName>
</protein>
<keyword id="KW-0961">Cell wall biogenesis/degradation</keyword>
<keyword id="KW-0325">Glycoprotein</keyword>
<keyword id="KW-0328">Glycosyltransferase</keyword>
<keyword id="KW-0333">Golgi apparatus</keyword>
<keyword id="KW-0472">Membrane</keyword>
<keyword id="KW-1185">Reference proteome</keyword>
<keyword id="KW-0735">Signal-anchor</keyword>
<keyword id="KW-0808">Transferase</keyword>
<keyword id="KW-0812">Transmembrane</keyword>
<keyword id="KW-1133">Transmembrane helix</keyword>
<evidence type="ECO:0000255" key="1"/>
<evidence type="ECO:0000256" key="2">
    <source>
        <dbReference type="SAM" id="MobiDB-lite"/>
    </source>
</evidence>
<evidence type="ECO:0000269" key="3">
    <source>
    </source>
</evidence>
<evidence type="ECO:0000269" key="4">
    <source>
    </source>
</evidence>
<evidence type="ECO:0000305" key="5"/>
<evidence type="ECO:0000305" key="6">
    <source>
    </source>
</evidence>
<accession>Q9FH90</accession>
<organism>
    <name type="scientific">Arabidopsis thaliana</name>
    <name type="common">Mouse-ear cress</name>
    <dbReference type="NCBI Taxonomy" id="3702"/>
    <lineage>
        <taxon>Eukaryota</taxon>
        <taxon>Viridiplantae</taxon>
        <taxon>Streptophyta</taxon>
        <taxon>Embryophyta</taxon>
        <taxon>Tracheophyta</taxon>
        <taxon>Spermatophyta</taxon>
        <taxon>Magnoliopsida</taxon>
        <taxon>eudicotyledons</taxon>
        <taxon>Gunneridae</taxon>
        <taxon>Pentapetalae</taxon>
        <taxon>rosids</taxon>
        <taxon>malvids</taxon>
        <taxon>Brassicales</taxon>
        <taxon>Brassicaceae</taxon>
        <taxon>Camelineae</taxon>
        <taxon>Arabidopsis</taxon>
    </lineage>
</organism>
<dbReference type="EC" id="2.4.2.-"/>
<dbReference type="EMBL" id="AB020742">
    <property type="protein sequence ID" value="BAB10957.1"/>
    <property type="molecule type" value="Genomic_DNA"/>
</dbReference>
<dbReference type="EMBL" id="CP002688">
    <property type="protein sequence ID" value="AED98316.1"/>
    <property type="molecule type" value="Genomic_DNA"/>
</dbReference>
<dbReference type="EMBL" id="AY070076">
    <property type="protein sequence ID" value="AAL49771.1"/>
    <property type="molecule type" value="mRNA"/>
</dbReference>
<dbReference type="SMR" id="Q9FH90"/>
<dbReference type="FunCoup" id="Q9FH90">
    <property type="interactions" value="11"/>
</dbReference>
<dbReference type="STRING" id="3702.Q9FH90"/>
<dbReference type="CAZy" id="GT43">
    <property type="family name" value="Glycosyltransferase Family 43"/>
</dbReference>
<dbReference type="GlyCosmos" id="Q9FH90">
    <property type="glycosylation" value="3 sites, No reported glycans"/>
</dbReference>
<dbReference type="GlyGen" id="Q9FH90">
    <property type="glycosylation" value="3 sites"/>
</dbReference>
<dbReference type="PaxDb" id="3702-AT5G67230.1"/>
<dbReference type="ProteomicsDB" id="238965"/>
<dbReference type="EnsemblPlants" id="AT5G67230.1">
    <property type="protein sequence ID" value="AT5G67230.1"/>
    <property type="gene ID" value="AT5G67230"/>
</dbReference>
<dbReference type="GeneID" id="836858"/>
<dbReference type="Gramene" id="AT5G67230.1">
    <property type="protein sequence ID" value="AT5G67230.1"/>
    <property type="gene ID" value="AT5G67230"/>
</dbReference>
<dbReference type="KEGG" id="ath:AT5G67230"/>
<dbReference type="Araport" id="AT5G67230"/>
<dbReference type="TAIR" id="AT5G67230">
    <property type="gene designation" value="IRX14-L"/>
</dbReference>
<dbReference type="eggNOG" id="KOG1476">
    <property type="taxonomic scope" value="Eukaryota"/>
</dbReference>
<dbReference type="HOGENOM" id="CLU_042214_1_0_1"/>
<dbReference type="InParanoid" id="Q9FH90"/>
<dbReference type="OMA" id="NTWEDRH"/>
<dbReference type="OrthoDB" id="675023at2759"/>
<dbReference type="PhylomeDB" id="Q9FH90"/>
<dbReference type="PRO" id="PR:Q9FH90"/>
<dbReference type="Proteomes" id="UP000006548">
    <property type="component" value="Chromosome 5"/>
</dbReference>
<dbReference type="ExpressionAtlas" id="Q9FH90">
    <property type="expression patterns" value="baseline and differential"/>
</dbReference>
<dbReference type="GO" id="GO:0005794">
    <property type="term" value="C:Golgi apparatus"/>
    <property type="evidence" value="ECO:0000314"/>
    <property type="project" value="TAIR"/>
</dbReference>
<dbReference type="GO" id="GO:0000139">
    <property type="term" value="C:Golgi membrane"/>
    <property type="evidence" value="ECO:0007669"/>
    <property type="project" value="UniProtKB-SubCell"/>
</dbReference>
<dbReference type="GO" id="GO:0015018">
    <property type="term" value="F:galactosylgalactosylxylosylprotein 3-beta-glucuronosyltransferase activity"/>
    <property type="evidence" value="ECO:0007669"/>
    <property type="project" value="InterPro"/>
</dbReference>
<dbReference type="GO" id="GO:0042285">
    <property type="term" value="F:xylosyltransferase activity"/>
    <property type="evidence" value="ECO:0000315"/>
    <property type="project" value="TAIR"/>
</dbReference>
<dbReference type="GO" id="GO:0071555">
    <property type="term" value="P:cell wall organization"/>
    <property type="evidence" value="ECO:0007669"/>
    <property type="project" value="UniProtKB-KW"/>
</dbReference>
<dbReference type="GO" id="GO:0010417">
    <property type="term" value="P:glucuronoxylan biosynthetic process"/>
    <property type="evidence" value="ECO:0000315"/>
    <property type="project" value="TAIR"/>
</dbReference>
<dbReference type="CDD" id="cd00218">
    <property type="entry name" value="GlcAT-I"/>
    <property type="match status" value="1"/>
</dbReference>
<dbReference type="FunFam" id="3.90.550.10:FF:000096">
    <property type="entry name" value="Glycosyltransferases"/>
    <property type="match status" value="1"/>
</dbReference>
<dbReference type="Gene3D" id="3.90.550.10">
    <property type="entry name" value="Spore Coat Polysaccharide Biosynthesis Protein SpsA, Chain A"/>
    <property type="match status" value="1"/>
</dbReference>
<dbReference type="InterPro" id="IPR005027">
    <property type="entry name" value="Glyco_trans_43"/>
</dbReference>
<dbReference type="InterPro" id="IPR029044">
    <property type="entry name" value="Nucleotide-diphossugar_trans"/>
</dbReference>
<dbReference type="PANTHER" id="PTHR10896:SF17">
    <property type="entry name" value="BETA-1,4-XYLOSYLTRANSFERASE IRX14H-RELATED"/>
    <property type="match status" value="1"/>
</dbReference>
<dbReference type="PANTHER" id="PTHR10896">
    <property type="entry name" value="GALACTOSYLGALACTOSYLXYLOSYLPROTEIN 3-BETA-GLUCURONOSYLTRANSFERASE BETA-1,3-GLUCURONYLTRANSFERASE"/>
    <property type="match status" value="1"/>
</dbReference>
<dbReference type="Pfam" id="PF03360">
    <property type="entry name" value="Glyco_transf_43"/>
    <property type="match status" value="1"/>
</dbReference>
<dbReference type="SUPFAM" id="SSF53448">
    <property type="entry name" value="Nucleotide-diphospho-sugar transferases"/>
    <property type="match status" value="1"/>
</dbReference>
<reference key="1">
    <citation type="journal article" date="2000" name="DNA Res.">
        <title>Structural analysis of Arabidopsis thaliana chromosome 5. X. Sequence features of the regions of 3,076,755 bp covered by sixty P1 and TAC clones.</title>
        <authorList>
            <person name="Sato S."/>
            <person name="Nakamura Y."/>
            <person name="Kaneko T."/>
            <person name="Katoh T."/>
            <person name="Asamizu E."/>
            <person name="Kotani H."/>
            <person name="Tabata S."/>
        </authorList>
    </citation>
    <scope>NUCLEOTIDE SEQUENCE [LARGE SCALE GENOMIC DNA]</scope>
    <source>
        <strain>cv. Columbia</strain>
    </source>
</reference>
<reference key="2">
    <citation type="journal article" date="2017" name="Plant J.">
        <title>Araport11: a complete reannotation of the Arabidopsis thaliana reference genome.</title>
        <authorList>
            <person name="Cheng C.Y."/>
            <person name="Krishnakumar V."/>
            <person name="Chan A.P."/>
            <person name="Thibaud-Nissen F."/>
            <person name="Schobel S."/>
            <person name="Town C.D."/>
        </authorList>
    </citation>
    <scope>GENOME REANNOTATION</scope>
    <source>
        <strain>cv. Columbia</strain>
    </source>
</reference>
<reference key="3">
    <citation type="journal article" date="2003" name="Science">
        <title>Empirical analysis of transcriptional activity in the Arabidopsis genome.</title>
        <authorList>
            <person name="Yamada K."/>
            <person name="Lim J."/>
            <person name="Dale J.M."/>
            <person name="Chen H."/>
            <person name="Shinn P."/>
            <person name="Palm C.J."/>
            <person name="Southwick A.M."/>
            <person name="Wu H.C."/>
            <person name="Kim C.J."/>
            <person name="Nguyen M."/>
            <person name="Pham P.K."/>
            <person name="Cheuk R.F."/>
            <person name="Karlin-Newmann G."/>
            <person name="Liu S.X."/>
            <person name="Lam B."/>
            <person name="Sakano H."/>
            <person name="Wu T."/>
            <person name="Yu G."/>
            <person name="Miranda M."/>
            <person name="Quach H.L."/>
            <person name="Tripp M."/>
            <person name="Chang C.H."/>
            <person name="Lee J.M."/>
            <person name="Toriumi M.J."/>
            <person name="Chan M.M."/>
            <person name="Tang C.C."/>
            <person name="Onodera C.S."/>
            <person name="Deng J.M."/>
            <person name="Akiyama K."/>
            <person name="Ansari Y."/>
            <person name="Arakawa T."/>
            <person name="Banh J."/>
            <person name="Banno F."/>
            <person name="Bowser L."/>
            <person name="Brooks S.Y."/>
            <person name="Carninci P."/>
            <person name="Chao Q."/>
            <person name="Choy N."/>
            <person name="Enju A."/>
            <person name="Goldsmith A.D."/>
            <person name="Gurjal M."/>
            <person name="Hansen N.F."/>
            <person name="Hayashizaki Y."/>
            <person name="Johnson-Hopson C."/>
            <person name="Hsuan V.W."/>
            <person name="Iida K."/>
            <person name="Karnes M."/>
            <person name="Khan S."/>
            <person name="Koesema E."/>
            <person name="Ishida J."/>
            <person name="Jiang P.X."/>
            <person name="Jones T."/>
            <person name="Kawai J."/>
            <person name="Kamiya A."/>
            <person name="Meyers C."/>
            <person name="Nakajima M."/>
            <person name="Narusaka M."/>
            <person name="Seki M."/>
            <person name="Sakurai T."/>
            <person name="Satou M."/>
            <person name="Tamse R."/>
            <person name="Vaysberg M."/>
            <person name="Wallender E.K."/>
            <person name="Wong C."/>
            <person name="Yamamura Y."/>
            <person name="Yuan S."/>
            <person name="Shinozaki K."/>
            <person name="Davis R.W."/>
            <person name="Theologis A."/>
            <person name="Ecker J.R."/>
        </authorList>
    </citation>
    <scope>NUCLEOTIDE SEQUENCE [LARGE SCALE MRNA]</scope>
    <source>
        <strain>cv. Columbia</strain>
    </source>
</reference>
<reference key="4">
    <citation type="journal article" date="2010" name="Plant Physiol.">
        <title>The Arabidopsis family GT43 glycosyltransferases form two functionally nonredundant groups essential for the elongation of glucuronoxylan backbone.</title>
        <authorList>
            <person name="Lee C."/>
            <person name="Teng Q."/>
            <person name="Huang W."/>
            <person name="Zhong R."/>
            <person name="Ye Z.H."/>
        </authorList>
    </citation>
    <scope>FUNCTION</scope>
    <scope>SUBCELLULAR LOCATION</scope>
    <scope>TISSUE SPECIFICITY</scope>
</reference>
<reference key="5">
    <citation type="journal article" date="2010" name="Plant Physiol.">
        <title>Analysis of the Arabidopsis IRX9/IRX9-L and IRX14/IRX14-L pairs of glycosyltransferase genes reveals critical contributions to biosynthesis of the hemicellulose glucuronoxylan.</title>
        <authorList>
            <person name="Wu A.M."/>
            <person name="Hoernblad E."/>
            <person name="Voxeur A."/>
            <person name="Gerber L."/>
            <person name="Rihouey C."/>
            <person name="Lerouge P."/>
            <person name="Marchant A."/>
        </authorList>
    </citation>
    <scope>FUNCTION</scope>
</reference>
<gene>
    <name type="primary">IRX14H</name>
    <name type="ordered locus">At5g67230</name>
    <name type="ORF">K21H1.19</name>
</gene>
<comment type="function">
    <text evidence="3 4">Involved in the synthesis of the hemicellulose glucuronoxylan, a major component of secondary cell walls. Probably involved in the elongation of glucuronoxylan xylosyl backbone.</text>
</comment>
<comment type="subcellular location">
    <subcellularLocation>
        <location evidence="6">Golgi apparatus membrane</location>
        <topology evidence="6">Single-pass type II membrane protein</topology>
    </subcellularLocation>
</comment>
<comment type="tissue specificity">
    <text evidence="3">Expressed in developing interfascicular fibers and xylem cells in stems and developing secondary xylem in roots.</text>
</comment>
<comment type="similarity">
    <text evidence="5">Belongs to the glycosyltransferase 43 family.</text>
</comment>